<gene>
    <name evidence="1" type="primary">truD</name>
    <name type="ordered locus">XCV1756</name>
</gene>
<proteinExistence type="inferred from homology"/>
<accession>Q3BUS6</accession>
<feature type="chain" id="PRO_0000230157" description="tRNA pseudouridine synthase D">
    <location>
        <begin position="1"/>
        <end position="369"/>
    </location>
</feature>
<feature type="domain" description="TRUD" evidence="1">
    <location>
        <begin position="156"/>
        <end position="318"/>
    </location>
</feature>
<feature type="active site" description="Nucleophile" evidence="1">
    <location>
        <position position="80"/>
    </location>
</feature>
<keyword id="KW-0413">Isomerase</keyword>
<keyword id="KW-0819">tRNA processing</keyword>
<evidence type="ECO:0000255" key="1">
    <source>
        <dbReference type="HAMAP-Rule" id="MF_01082"/>
    </source>
</evidence>
<organism>
    <name type="scientific">Xanthomonas euvesicatoria pv. vesicatoria (strain 85-10)</name>
    <name type="common">Xanthomonas campestris pv. vesicatoria</name>
    <dbReference type="NCBI Taxonomy" id="316273"/>
    <lineage>
        <taxon>Bacteria</taxon>
        <taxon>Pseudomonadati</taxon>
        <taxon>Pseudomonadota</taxon>
        <taxon>Gammaproteobacteria</taxon>
        <taxon>Lysobacterales</taxon>
        <taxon>Lysobacteraceae</taxon>
        <taxon>Xanthomonas</taxon>
    </lineage>
</organism>
<dbReference type="EC" id="5.4.99.27" evidence="1"/>
<dbReference type="EMBL" id="AM039952">
    <property type="protein sequence ID" value="CAJ23433.1"/>
    <property type="molecule type" value="Genomic_DNA"/>
</dbReference>
<dbReference type="RefSeq" id="WP_011347102.1">
    <property type="nucleotide sequence ID" value="NZ_CP017190.1"/>
</dbReference>
<dbReference type="SMR" id="Q3BUS6"/>
<dbReference type="STRING" id="456327.BJD11_13765"/>
<dbReference type="KEGG" id="xcv:XCV1756"/>
<dbReference type="eggNOG" id="COG0585">
    <property type="taxonomic scope" value="Bacteria"/>
</dbReference>
<dbReference type="HOGENOM" id="CLU_005281_4_0_6"/>
<dbReference type="Proteomes" id="UP000007069">
    <property type="component" value="Chromosome"/>
</dbReference>
<dbReference type="GO" id="GO:0005829">
    <property type="term" value="C:cytosol"/>
    <property type="evidence" value="ECO:0007669"/>
    <property type="project" value="TreeGrafter"/>
</dbReference>
<dbReference type="GO" id="GO:0003723">
    <property type="term" value="F:RNA binding"/>
    <property type="evidence" value="ECO:0007669"/>
    <property type="project" value="InterPro"/>
</dbReference>
<dbReference type="GO" id="GO:0160150">
    <property type="term" value="F:tRNA pseudouridine(13) synthase activity"/>
    <property type="evidence" value="ECO:0007669"/>
    <property type="project" value="UniProtKB-EC"/>
</dbReference>
<dbReference type="GO" id="GO:0031119">
    <property type="term" value="P:tRNA pseudouridine synthesis"/>
    <property type="evidence" value="ECO:0007669"/>
    <property type="project" value="UniProtKB-UniRule"/>
</dbReference>
<dbReference type="CDD" id="cd02575">
    <property type="entry name" value="PseudoU_synth_EcTruD"/>
    <property type="match status" value="1"/>
</dbReference>
<dbReference type="Gene3D" id="3.30.2350.20">
    <property type="entry name" value="TruD, catalytic domain"/>
    <property type="match status" value="1"/>
</dbReference>
<dbReference type="Gene3D" id="3.30.2340.10">
    <property type="entry name" value="TruD, insertion domain"/>
    <property type="match status" value="1"/>
</dbReference>
<dbReference type="HAMAP" id="MF_01082">
    <property type="entry name" value="TruD"/>
    <property type="match status" value="1"/>
</dbReference>
<dbReference type="InterPro" id="IPR020103">
    <property type="entry name" value="PsdUridine_synth_cat_dom_sf"/>
</dbReference>
<dbReference type="InterPro" id="IPR001656">
    <property type="entry name" value="PsdUridine_synth_TruD"/>
</dbReference>
<dbReference type="InterPro" id="IPR020119">
    <property type="entry name" value="PsdUridine_synth_TruD_CS"/>
</dbReference>
<dbReference type="InterPro" id="IPR011760">
    <property type="entry name" value="PsdUridine_synth_TruD_insert"/>
</dbReference>
<dbReference type="InterPro" id="IPR042214">
    <property type="entry name" value="TruD_catalytic"/>
</dbReference>
<dbReference type="InterPro" id="IPR043165">
    <property type="entry name" value="TruD_insert_sf"/>
</dbReference>
<dbReference type="InterPro" id="IPR050170">
    <property type="entry name" value="TruD_pseudoU_synthase"/>
</dbReference>
<dbReference type="NCBIfam" id="NF002153">
    <property type="entry name" value="PRK00984.1-2"/>
    <property type="match status" value="1"/>
</dbReference>
<dbReference type="PANTHER" id="PTHR47811">
    <property type="entry name" value="TRNA PSEUDOURIDINE SYNTHASE D"/>
    <property type="match status" value="1"/>
</dbReference>
<dbReference type="PANTHER" id="PTHR47811:SF1">
    <property type="entry name" value="TRNA PSEUDOURIDINE SYNTHASE D"/>
    <property type="match status" value="1"/>
</dbReference>
<dbReference type="Pfam" id="PF01142">
    <property type="entry name" value="TruD"/>
    <property type="match status" value="2"/>
</dbReference>
<dbReference type="SUPFAM" id="SSF55120">
    <property type="entry name" value="Pseudouridine synthase"/>
    <property type="match status" value="1"/>
</dbReference>
<dbReference type="PROSITE" id="PS50984">
    <property type="entry name" value="TRUD"/>
    <property type="match status" value="1"/>
</dbReference>
<dbReference type="PROSITE" id="PS01268">
    <property type="entry name" value="UPF0024"/>
    <property type="match status" value="1"/>
</dbReference>
<comment type="function">
    <text evidence="1">Responsible for synthesis of pseudouridine from uracil-13 in transfer RNAs.</text>
</comment>
<comment type="catalytic activity">
    <reaction evidence="1">
        <text>uridine(13) in tRNA = pseudouridine(13) in tRNA</text>
        <dbReference type="Rhea" id="RHEA:42540"/>
        <dbReference type="Rhea" id="RHEA-COMP:10105"/>
        <dbReference type="Rhea" id="RHEA-COMP:10106"/>
        <dbReference type="ChEBI" id="CHEBI:65314"/>
        <dbReference type="ChEBI" id="CHEBI:65315"/>
        <dbReference type="EC" id="5.4.99.27"/>
    </reaction>
</comment>
<comment type="similarity">
    <text evidence="1">Belongs to the pseudouridine synthase TruD family.</text>
</comment>
<sequence>MSETSLLPRAHGAAVLSAAMRSTPDDFQLDELPAFEPSGEGEHLLLTVRKRGQNTAYIAKQLAHWAGIAEMGVSYAGLKDRHAVTTQRFSVHLPKRIAPDIAALDDAQMQVVQSAWHNRKLQRGALHGNRFVLTLRQVQGEREAIEQRLQAIAARGIPNWFGEQRFGRDGANVAAALAMFGHVQAEDGTLLPAPTSRRRLRNDQRSMLLSAARSVLFNRVLGARVAQGSWDSALQGEAWMLDGSRSVFGPEPWSEALAERLARFDIHPSGPLWGVGDLRSADQAAALEQGALSDPQSEALRQGLEAAGLKQERRALRLRPQGLDYRWLEAQTLQLEFALPPGCYATAVLWELGDVTDAGRFNVGMRADA</sequence>
<reference key="1">
    <citation type="journal article" date="2005" name="J. Bacteriol.">
        <title>Insights into genome plasticity and pathogenicity of the plant pathogenic Bacterium Xanthomonas campestris pv. vesicatoria revealed by the complete genome sequence.</title>
        <authorList>
            <person name="Thieme F."/>
            <person name="Koebnik R."/>
            <person name="Bekel T."/>
            <person name="Berger C."/>
            <person name="Boch J."/>
            <person name="Buettner D."/>
            <person name="Caldana C."/>
            <person name="Gaigalat L."/>
            <person name="Goesmann A."/>
            <person name="Kay S."/>
            <person name="Kirchner O."/>
            <person name="Lanz C."/>
            <person name="Linke B."/>
            <person name="McHardy A.C."/>
            <person name="Meyer F."/>
            <person name="Mittenhuber G."/>
            <person name="Nies D.H."/>
            <person name="Niesbach-Kloesgen U."/>
            <person name="Patschkowski T."/>
            <person name="Rueckert C."/>
            <person name="Rupp O."/>
            <person name="Schneiker S."/>
            <person name="Schuster S.C."/>
            <person name="Vorhoelter F.J."/>
            <person name="Weber E."/>
            <person name="Puehler A."/>
            <person name="Bonas U."/>
            <person name="Bartels D."/>
            <person name="Kaiser O."/>
        </authorList>
    </citation>
    <scope>NUCLEOTIDE SEQUENCE [LARGE SCALE GENOMIC DNA]</scope>
    <source>
        <strain>85-10</strain>
    </source>
</reference>
<name>TRUD_XANE5</name>
<protein>
    <recommendedName>
        <fullName evidence="1">tRNA pseudouridine synthase D</fullName>
        <ecNumber evidence="1">5.4.99.27</ecNumber>
    </recommendedName>
    <alternativeName>
        <fullName evidence="1">tRNA pseudouridine(13) synthase</fullName>
    </alternativeName>
    <alternativeName>
        <fullName evidence="1">tRNA pseudouridylate synthase D</fullName>
    </alternativeName>
    <alternativeName>
        <fullName evidence="1">tRNA-uridine isomerase D</fullName>
    </alternativeName>
</protein>